<name>RLMN_NAUPA</name>
<evidence type="ECO:0000255" key="1">
    <source>
        <dbReference type="HAMAP-Rule" id="MF_01849"/>
    </source>
</evidence>
<evidence type="ECO:0000255" key="2">
    <source>
        <dbReference type="PROSITE-ProRule" id="PRU01266"/>
    </source>
</evidence>
<proteinExistence type="inferred from homology"/>
<feature type="chain" id="PRO_1000216122" description="Dual-specificity RNA methyltransferase RlmN">
    <location>
        <begin position="1"/>
        <end position="354"/>
    </location>
</feature>
<feature type="domain" description="Radical SAM core" evidence="2">
    <location>
        <begin position="106"/>
        <end position="339"/>
    </location>
</feature>
<feature type="active site" description="Proton acceptor" evidence="1">
    <location>
        <position position="89"/>
    </location>
</feature>
<feature type="active site" description="S-methylcysteine intermediate" evidence="1">
    <location>
        <position position="344"/>
    </location>
</feature>
<feature type="binding site" evidence="1">
    <location>
        <position position="120"/>
    </location>
    <ligand>
        <name>[4Fe-4S] cluster</name>
        <dbReference type="ChEBI" id="CHEBI:49883"/>
        <note>4Fe-4S-S-AdoMet</note>
    </ligand>
</feature>
<feature type="binding site" evidence="1">
    <location>
        <position position="124"/>
    </location>
    <ligand>
        <name>[4Fe-4S] cluster</name>
        <dbReference type="ChEBI" id="CHEBI:49883"/>
        <note>4Fe-4S-S-AdoMet</note>
    </ligand>
</feature>
<feature type="binding site" evidence="1">
    <location>
        <position position="127"/>
    </location>
    <ligand>
        <name>[4Fe-4S] cluster</name>
        <dbReference type="ChEBI" id="CHEBI:49883"/>
        <note>4Fe-4S-S-AdoMet</note>
    </ligand>
</feature>
<feature type="binding site" evidence="1">
    <location>
        <begin position="170"/>
        <end position="171"/>
    </location>
    <ligand>
        <name>S-adenosyl-L-methionine</name>
        <dbReference type="ChEBI" id="CHEBI:59789"/>
    </ligand>
</feature>
<feature type="binding site" evidence="1">
    <location>
        <position position="202"/>
    </location>
    <ligand>
        <name>S-adenosyl-L-methionine</name>
        <dbReference type="ChEBI" id="CHEBI:59789"/>
    </ligand>
</feature>
<feature type="binding site" evidence="1">
    <location>
        <begin position="225"/>
        <end position="227"/>
    </location>
    <ligand>
        <name>S-adenosyl-L-methionine</name>
        <dbReference type="ChEBI" id="CHEBI:59789"/>
    </ligand>
</feature>
<feature type="binding site" evidence="1">
    <location>
        <position position="301"/>
    </location>
    <ligand>
        <name>S-adenosyl-L-methionine</name>
        <dbReference type="ChEBI" id="CHEBI:59789"/>
    </ligand>
</feature>
<feature type="disulfide bond" description="(transient)" evidence="1">
    <location>
        <begin position="113"/>
        <end position="344"/>
    </location>
</feature>
<organism>
    <name type="scientific">Nautilia profundicola (strain ATCC BAA-1463 / DSM 18972 / AmH)</name>
    <dbReference type="NCBI Taxonomy" id="598659"/>
    <lineage>
        <taxon>Bacteria</taxon>
        <taxon>Pseudomonadati</taxon>
        <taxon>Campylobacterota</taxon>
        <taxon>Epsilonproteobacteria</taxon>
        <taxon>Nautiliales</taxon>
        <taxon>Nautiliaceae</taxon>
        <taxon>Nautilia</taxon>
    </lineage>
</organism>
<gene>
    <name evidence="1" type="primary">rlmN</name>
    <name type="ordered locus">NAMH_1793</name>
</gene>
<dbReference type="EC" id="2.1.1.192" evidence="1"/>
<dbReference type="EMBL" id="CP001279">
    <property type="protein sequence ID" value="ACM93772.1"/>
    <property type="molecule type" value="Genomic_DNA"/>
</dbReference>
<dbReference type="RefSeq" id="WP_015902824.1">
    <property type="nucleotide sequence ID" value="NC_012115.1"/>
</dbReference>
<dbReference type="SMR" id="B9L721"/>
<dbReference type="STRING" id="598659.NAMH_1793"/>
<dbReference type="KEGG" id="nam:NAMH_1793"/>
<dbReference type="eggNOG" id="COG0820">
    <property type="taxonomic scope" value="Bacteria"/>
</dbReference>
<dbReference type="HOGENOM" id="CLU_029101_2_0_7"/>
<dbReference type="OrthoDB" id="9793973at2"/>
<dbReference type="Proteomes" id="UP000000448">
    <property type="component" value="Chromosome"/>
</dbReference>
<dbReference type="GO" id="GO:0005737">
    <property type="term" value="C:cytoplasm"/>
    <property type="evidence" value="ECO:0007669"/>
    <property type="project" value="UniProtKB-SubCell"/>
</dbReference>
<dbReference type="GO" id="GO:0051539">
    <property type="term" value="F:4 iron, 4 sulfur cluster binding"/>
    <property type="evidence" value="ECO:0007669"/>
    <property type="project" value="UniProtKB-UniRule"/>
</dbReference>
<dbReference type="GO" id="GO:0046872">
    <property type="term" value="F:metal ion binding"/>
    <property type="evidence" value="ECO:0007669"/>
    <property type="project" value="UniProtKB-KW"/>
</dbReference>
<dbReference type="GO" id="GO:0070040">
    <property type="term" value="F:rRNA (adenine(2503)-C2-)-methyltransferase activity"/>
    <property type="evidence" value="ECO:0007669"/>
    <property type="project" value="UniProtKB-UniRule"/>
</dbReference>
<dbReference type="GO" id="GO:0019843">
    <property type="term" value="F:rRNA binding"/>
    <property type="evidence" value="ECO:0007669"/>
    <property type="project" value="UniProtKB-UniRule"/>
</dbReference>
<dbReference type="GO" id="GO:0002935">
    <property type="term" value="F:tRNA (adenine(37)-C2)-methyltransferase activity"/>
    <property type="evidence" value="ECO:0007669"/>
    <property type="project" value="UniProtKB-UniRule"/>
</dbReference>
<dbReference type="GO" id="GO:0000049">
    <property type="term" value="F:tRNA binding"/>
    <property type="evidence" value="ECO:0007669"/>
    <property type="project" value="UniProtKB-UniRule"/>
</dbReference>
<dbReference type="GO" id="GO:0070475">
    <property type="term" value="P:rRNA base methylation"/>
    <property type="evidence" value="ECO:0007669"/>
    <property type="project" value="UniProtKB-UniRule"/>
</dbReference>
<dbReference type="GO" id="GO:0030488">
    <property type="term" value="P:tRNA methylation"/>
    <property type="evidence" value="ECO:0007669"/>
    <property type="project" value="UniProtKB-UniRule"/>
</dbReference>
<dbReference type="CDD" id="cd01335">
    <property type="entry name" value="Radical_SAM"/>
    <property type="match status" value="1"/>
</dbReference>
<dbReference type="FunFam" id="3.20.20.70:FF:000014">
    <property type="entry name" value="Probable dual-specificity RNA methyltransferase RlmN"/>
    <property type="match status" value="1"/>
</dbReference>
<dbReference type="Gene3D" id="1.10.150.530">
    <property type="match status" value="1"/>
</dbReference>
<dbReference type="Gene3D" id="3.20.20.70">
    <property type="entry name" value="Aldolase class I"/>
    <property type="match status" value="1"/>
</dbReference>
<dbReference type="HAMAP" id="MF_01849">
    <property type="entry name" value="RNA_methyltr_RlmN"/>
    <property type="match status" value="1"/>
</dbReference>
<dbReference type="InterPro" id="IPR013785">
    <property type="entry name" value="Aldolase_TIM"/>
</dbReference>
<dbReference type="InterPro" id="IPR040072">
    <property type="entry name" value="Methyltransferase_A"/>
</dbReference>
<dbReference type="InterPro" id="IPR048641">
    <property type="entry name" value="RlmN_N"/>
</dbReference>
<dbReference type="InterPro" id="IPR027492">
    <property type="entry name" value="RNA_MTrfase_RlmN"/>
</dbReference>
<dbReference type="InterPro" id="IPR004383">
    <property type="entry name" value="rRNA_lsu_MTrfase_RlmN/Cfr"/>
</dbReference>
<dbReference type="InterPro" id="IPR007197">
    <property type="entry name" value="rSAM"/>
</dbReference>
<dbReference type="NCBIfam" id="TIGR00048">
    <property type="entry name" value="rRNA_mod_RlmN"/>
    <property type="match status" value="1"/>
</dbReference>
<dbReference type="PANTHER" id="PTHR30544">
    <property type="entry name" value="23S RRNA METHYLTRANSFERASE"/>
    <property type="match status" value="1"/>
</dbReference>
<dbReference type="PANTHER" id="PTHR30544:SF5">
    <property type="entry name" value="RADICAL SAM CORE DOMAIN-CONTAINING PROTEIN"/>
    <property type="match status" value="1"/>
</dbReference>
<dbReference type="Pfam" id="PF04055">
    <property type="entry name" value="Radical_SAM"/>
    <property type="match status" value="1"/>
</dbReference>
<dbReference type="Pfam" id="PF21016">
    <property type="entry name" value="RlmN_N"/>
    <property type="match status" value="1"/>
</dbReference>
<dbReference type="PIRSF" id="PIRSF006004">
    <property type="entry name" value="CHP00048"/>
    <property type="match status" value="1"/>
</dbReference>
<dbReference type="SFLD" id="SFLDF00275">
    <property type="entry name" value="adenosine_C2_methyltransferase"/>
    <property type="match status" value="1"/>
</dbReference>
<dbReference type="SFLD" id="SFLDS00029">
    <property type="entry name" value="Radical_SAM"/>
    <property type="match status" value="1"/>
</dbReference>
<dbReference type="SUPFAM" id="SSF102114">
    <property type="entry name" value="Radical SAM enzymes"/>
    <property type="match status" value="1"/>
</dbReference>
<dbReference type="PROSITE" id="PS51918">
    <property type="entry name" value="RADICAL_SAM"/>
    <property type="match status" value="1"/>
</dbReference>
<reference key="1">
    <citation type="journal article" date="2009" name="PLoS Genet.">
        <title>Adaptations to submarine hydrothermal environments exemplified by the genome of Nautilia profundicola.</title>
        <authorList>
            <person name="Campbell B.J."/>
            <person name="Smith J.L."/>
            <person name="Hanson T.E."/>
            <person name="Klotz M.G."/>
            <person name="Stein L.Y."/>
            <person name="Lee C.K."/>
            <person name="Wu D."/>
            <person name="Robinson J.M."/>
            <person name="Khouri H.M."/>
            <person name="Eisen J.A."/>
            <person name="Cary S.C."/>
        </authorList>
    </citation>
    <scope>NUCLEOTIDE SEQUENCE [LARGE SCALE GENOMIC DNA]</scope>
    <source>
        <strain>ATCC BAA-1463 / DSM 18972 / AmH</strain>
    </source>
</reference>
<comment type="function">
    <text evidence="1">Specifically methylates position 2 of adenine 2503 in 23S rRNA and position 2 of adenine 37 in tRNAs. m2A2503 modification seems to play a crucial role in the proofreading step occurring at the peptidyl transferase center and thus would serve to optimize ribosomal fidelity.</text>
</comment>
<comment type="catalytic activity">
    <reaction evidence="1">
        <text>adenosine(2503) in 23S rRNA + 2 reduced [2Fe-2S]-[ferredoxin] + 2 S-adenosyl-L-methionine = 2-methyladenosine(2503) in 23S rRNA + 5'-deoxyadenosine + L-methionine + 2 oxidized [2Fe-2S]-[ferredoxin] + S-adenosyl-L-homocysteine</text>
        <dbReference type="Rhea" id="RHEA:42916"/>
        <dbReference type="Rhea" id="RHEA-COMP:10000"/>
        <dbReference type="Rhea" id="RHEA-COMP:10001"/>
        <dbReference type="Rhea" id="RHEA-COMP:10152"/>
        <dbReference type="Rhea" id="RHEA-COMP:10282"/>
        <dbReference type="ChEBI" id="CHEBI:17319"/>
        <dbReference type="ChEBI" id="CHEBI:33737"/>
        <dbReference type="ChEBI" id="CHEBI:33738"/>
        <dbReference type="ChEBI" id="CHEBI:57844"/>
        <dbReference type="ChEBI" id="CHEBI:57856"/>
        <dbReference type="ChEBI" id="CHEBI:59789"/>
        <dbReference type="ChEBI" id="CHEBI:74411"/>
        <dbReference type="ChEBI" id="CHEBI:74497"/>
        <dbReference type="EC" id="2.1.1.192"/>
    </reaction>
</comment>
<comment type="catalytic activity">
    <reaction evidence="1">
        <text>adenosine(37) in tRNA + 2 reduced [2Fe-2S]-[ferredoxin] + 2 S-adenosyl-L-methionine = 2-methyladenosine(37) in tRNA + 5'-deoxyadenosine + L-methionine + 2 oxidized [2Fe-2S]-[ferredoxin] + S-adenosyl-L-homocysteine</text>
        <dbReference type="Rhea" id="RHEA:43332"/>
        <dbReference type="Rhea" id="RHEA-COMP:10000"/>
        <dbReference type="Rhea" id="RHEA-COMP:10001"/>
        <dbReference type="Rhea" id="RHEA-COMP:10162"/>
        <dbReference type="Rhea" id="RHEA-COMP:10485"/>
        <dbReference type="ChEBI" id="CHEBI:17319"/>
        <dbReference type="ChEBI" id="CHEBI:33737"/>
        <dbReference type="ChEBI" id="CHEBI:33738"/>
        <dbReference type="ChEBI" id="CHEBI:57844"/>
        <dbReference type="ChEBI" id="CHEBI:57856"/>
        <dbReference type="ChEBI" id="CHEBI:59789"/>
        <dbReference type="ChEBI" id="CHEBI:74411"/>
        <dbReference type="ChEBI" id="CHEBI:74497"/>
        <dbReference type="EC" id="2.1.1.192"/>
    </reaction>
</comment>
<comment type="cofactor">
    <cofactor evidence="1">
        <name>[4Fe-4S] cluster</name>
        <dbReference type="ChEBI" id="CHEBI:49883"/>
    </cofactor>
    <text evidence="1">Binds 1 [4Fe-4S] cluster. The cluster is coordinated with 3 cysteines and an exchangeable S-adenosyl-L-methionine.</text>
</comment>
<comment type="subcellular location">
    <subcellularLocation>
        <location evidence="1">Cytoplasm</location>
    </subcellularLocation>
</comment>
<comment type="miscellaneous">
    <text evidence="1">Reaction proceeds by a ping-pong mechanism involving intermediate methylation of a conserved cysteine residue.</text>
</comment>
<comment type="similarity">
    <text evidence="1">Belongs to the radical SAM superfamily. RlmN family.</text>
</comment>
<protein>
    <recommendedName>
        <fullName evidence="1">Dual-specificity RNA methyltransferase RlmN</fullName>
        <ecNumber evidence="1">2.1.1.192</ecNumber>
    </recommendedName>
    <alternativeName>
        <fullName evidence="1">23S rRNA (adenine(2503)-C(2))-methyltransferase</fullName>
    </alternativeName>
    <alternativeName>
        <fullName evidence="1">23S rRNA m2A2503 methyltransferase</fullName>
    </alternativeName>
    <alternativeName>
        <fullName evidence="1">Ribosomal RNA large subunit methyltransferase N</fullName>
    </alternativeName>
    <alternativeName>
        <fullName evidence="1">tRNA (adenine(37)-C(2))-methyltransferase</fullName>
    </alternativeName>
    <alternativeName>
        <fullName evidence="1">tRNA m2A37 methyltransferase</fullName>
    </alternativeName>
</protein>
<keyword id="KW-0004">4Fe-4S</keyword>
<keyword id="KW-0963">Cytoplasm</keyword>
<keyword id="KW-1015">Disulfide bond</keyword>
<keyword id="KW-0408">Iron</keyword>
<keyword id="KW-0411">Iron-sulfur</keyword>
<keyword id="KW-0479">Metal-binding</keyword>
<keyword id="KW-0489">Methyltransferase</keyword>
<keyword id="KW-0698">rRNA processing</keyword>
<keyword id="KW-0949">S-adenosyl-L-methionine</keyword>
<keyword id="KW-0808">Transferase</keyword>
<keyword id="KW-0819">tRNA processing</keyword>
<accession>B9L721</accession>
<sequence>MDKKIFMDYLPEELMEFGIQPKFRTKQLYQWVYRKYVDDFEEMKNIPKDLKAKLKKEFIINPLELINHEIATDGTEKFLFKMHDNHTVETVLIKMKDEEIKDGKIKEAKYTVCVSTQVGCKVGCAFCLTAKGGFVRNLSAGEIVAQVWWMKKFKNFDENKALNVVYMGMGEPLDNYDALVKAIKILANPDGMNISPRRQTVSTSGIAPKIKRLGNENLGVNLAISLHAVDDELREQLIPLNKAYNIESVIDAIREFPIDKRKKVMFEYLVIKDVNDDIESAKKLVKLLNGIPSKVNLIYFNPYPGTNFKRPDDATMKKFQDYLINKGIMCTIRKSKGMDISAACGQLREKEINK</sequence>